<comment type="function">
    <text evidence="2 3">mRNA splicing factor that regulates the formation of epithelial cell-specific isoforms. Specifically regulates the expression of FGFR2-IIIb, an epithelial cell-specific isoform of FGFR2. Also regulates the splicing of CD44, CTNND1, ENAH, 3 transcripts that undergo changes in splicing during the epithelial-to-mesenchymal transition (EMT). Acts by directly binding specific sequences in mRNAs. Binds the GU-rich sequence motifs in the ISE/ISS-3, a cis-element regulatory region present in the mRNA of FGFR2 (By similarity). Regulates splicing and expression of genes involved in inner ear development, auditory hair cell differentiation, and cell fate specification in the cochlear epithelium (By similarity).</text>
</comment>
<comment type="subcellular location">
    <subcellularLocation>
        <location evidence="1">Nucleus</location>
    </subcellularLocation>
</comment>
<comment type="alternative products">
    <event type="alternative splicing"/>
    <isoform>
        <id>B2RYD2-1</id>
        <name>1</name>
        <sequence type="displayed"/>
    </isoform>
    <isoform>
        <id>B2RYD2-2</id>
        <name>2</name>
        <sequence type="described" ref="VSP_036958"/>
    </isoform>
</comment>
<comment type="similarity">
    <text evidence="7">Belongs to the ESRP family.</text>
</comment>
<proteinExistence type="evidence at transcript level"/>
<evidence type="ECO:0000250" key="1"/>
<evidence type="ECO:0000250" key="2">
    <source>
        <dbReference type="UniProtKB" id="Q3US41"/>
    </source>
</evidence>
<evidence type="ECO:0000250" key="3">
    <source>
        <dbReference type="UniProtKB" id="Q6NXG1"/>
    </source>
</evidence>
<evidence type="ECO:0000250" key="4">
    <source>
        <dbReference type="UniProtKB" id="Q9H6T0"/>
    </source>
</evidence>
<evidence type="ECO:0000255" key="5">
    <source>
        <dbReference type="PROSITE-ProRule" id="PRU00176"/>
    </source>
</evidence>
<evidence type="ECO:0000303" key="6">
    <source>
    </source>
</evidence>
<evidence type="ECO:0000305" key="7"/>
<feature type="chain" id="PRO_0000370631" description="Epithelial splicing regulatory protein 1">
    <location>
        <begin position="1"/>
        <end position="677"/>
    </location>
</feature>
<feature type="domain" description="RRM 1" evidence="5">
    <location>
        <begin position="225"/>
        <end position="302"/>
    </location>
</feature>
<feature type="domain" description="RRM 2" evidence="5">
    <location>
        <begin position="326"/>
        <end position="406"/>
    </location>
</feature>
<feature type="domain" description="RRM 3" evidence="5">
    <location>
        <begin position="445"/>
        <end position="525"/>
    </location>
</feature>
<feature type="modified residue" description="Phosphoserine" evidence="4">
    <location>
        <position position="543"/>
    </location>
</feature>
<feature type="modified residue" description="Omega-N-methylarginine" evidence="3">
    <location>
        <position position="578"/>
    </location>
</feature>
<feature type="splice variant" id="VSP_036958" description="In isoform 2." evidence="6">
    <original>YATEDGLVHANDQARTVPKEWVCI</original>
    <variation>CLKDAW</variation>
    <location>
        <begin position="654"/>
        <end position="677"/>
    </location>
</feature>
<reference key="1">
    <citation type="journal article" date="2004" name="Nature">
        <title>Genome sequence of the Brown Norway rat yields insights into mammalian evolution.</title>
        <authorList>
            <person name="Gibbs R.A."/>
            <person name="Weinstock G.M."/>
            <person name="Metzker M.L."/>
            <person name="Muzny D.M."/>
            <person name="Sodergren E.J."/>
            <person name="Scherer S."/>
            <person name="Scott G."/>
            <person name="Steffen D."/>
            <person name="Worley K.C."/>
            <person name="Burch P.E."/>
            <person name="Okwuonu G."/>
            <person name="Hines S."/>
            <person name="Lewis L."/>
            <person name="Deramo C."/>
            <person name="Delgado O."/>
            <person name="Dugan-Rocha S."/>
            <person name="Miner G."/>
            <person name="Morgan M."/>
            <person name="Hawes A."/>
            <person name="Gill R."/>
            <person name="Holt R.A."/>
            <person name="Adams M.D."/>
            <person name="Amanatides P.G."/>
            <person name="Baden-Tillson H."/>
            <person name="Barnstead M."/>
            <person name="Chin S."/>
            <person name="Evans C.A."/>
            <person name="Ferriera S."/>
            <person name="Fosler C."/>
            <person name="Glodek A."/>
            <person name="Gu Z."/>
            <person name="Jennings D."/>
            <person name="Kraft C.L."/>
            <person name="Nguyen T."/>
            <person name="Pfannkoch C.M."/>
            <person name="Sitter C."/>
            <person name="Sutton G.G."/>
            <person name="Venter J.C."/>
            <person name="Woodage T."/>
            <person name="Smith D."/>
            <person name="Lee H.-M."/>
            <person name="Gustafson E."/>
            <person name="Cahill P."/>
            <person name="Kana A."/>
            <person name="Doucette-Stamm L."/>
            <person name="Weinstock K."/>
            <person name="Fechtel K."/>
            <person name="Weiss R.B."/>
            <person name="Dunn D.M."/>
            <person name="Green E.D."/>
            <person name="Blakesley R.W."/>
            <person name="Bouffard G.G."/>
            <person name="De Jong P.J."/>
            <person name="Osoegawa K."/>
            <person name="Zhu B."/>
            <person name="Marra M."/>
            <person name="Schein J."/>
            <person name="Bosdet I."/>
            <person name="Fjell C."/>
            <person name="Jones S."/>
            <person name="Krzywinski M."/>
            <person name="Mathewson C."/>
            <person name="Siddiqui A."/>
            <person name="Wye N."/>
            <person name="McPherson J."/>
            <person name="Zhao S."/>
            <person name="Fraser C.M."/>
            <person name="Shetty J."/>
            <person name="Shatsman S."/>
            <person name="Geer K."/>
            <person name="Chen Y."/>
            <person name="Abramzon S."/>
            <person name="Nierman W.C."/>
            <person name="Havlak P.H."/>
            <person name="Chen R."/>
            <person name="Durbin K.J."/>
            <person name="Egan A."/>
            <person name="Ren Y."/>
            <person name="Song X.-Z."/>
            <person name="Li B."/>
            <person name="Liu Y."/>
            <person name="Qin X."/>
            <person name="Cawley S."/>
            <person name="Cooney A.J."/>
            <person name="D'Souza L.M."/>
            <person name="Martin K."/>
            <person name="Wu J.Q."/>
            <person name="Gonzalez-Garay M.L."/>
            <person name="Jackson A.R."/>
            <person name="Kalafus K.J."/>
            <person name="McLeod M.P."/>
            <person name="Milosavljevic A."/>
            <person name="Virk D."/>
            <person name="Volkov A."/>
            <person name="Wheeler D.A."/>
            <person name="Zhang Z."/>
            <person name="Bailey J.A."/>
            <person name="Eichler E.E."/>
            <person name="Tuzun E."/>
            <person name="Birney E."/>
            <person name="Mongin E."/>
            <person name="Ureta-Vidal A."/>
            <person name="Woodwark C."/>
            <person name="Zdobnov E."/>
            <person name="Bork P."/>
            <person name="Suyama M."/>
            <person name="Torrents D."/>
            <person name="Alexandersson M."/>
            <person name="Trask B.J."/>
            <person name="Young J.M."/>
            <person name="Huang H."/>
            <person name="Wang H."/>
            <person name="Xing H."/>
            <person name="Daniels S."/>
            <person name="Gietzen D."/>
            <person name="Schmidt J."/>
            <person name="Stevens K."/>
            <person name="Vitt U."/>
            <person name="Wingrove J."/>
            <person name="Camara F."/>
            <person name="Mar Alba M."/>
            <person name="Abril J.F."/>
            <person name="Guigo R."/>
            <person name="Smit A."/>
            <person name="Dubchak I."/>
            <person name="Rubin E.M."/>
            <person name="Couronne O."/>
            <person name="Poliakov A."/>
            <person name="Huebner N."/>
            <person name="Ganten D."/>
            <person name="Goesele C."/>
            <person name="Hummel O."/>
            <person name="Kreitler T."/>
            <person name="Lee Y.-A."/>
            <person name="Monti J."/>
            <person name="Schulz H."/>
            <person name="Zimdahl H."/>
            <person name="Himmelbauer H."/>
            <person name="Lehrach H."/>
            <person name="Jacob H.J."/>
            <person name="Bromberg S."/>
            <person name="Gullings-Handley J."/>
            <person name="Jensen-Seaman M.I."/>
            <person name="Kwitek A.E."/>
            <person name="Lazar J."/>
            <person name="Pasko D."/>
            <person name="Tonellato P.J."/>
            <person name="Twigger S."/>
            <person name="Ponting C.P."/>
            <person name="Duarte J.M."/>
            <person name="Rice S."/>
            <person name="Goodstadt L."/>
            <person name="Beatson S.A."/>
            <person name="Emes R.D."/>
            <person name="Winter E.E."/>
            <person name="Webber C."/>
            <person name="Brandt P."/>
            <person name="Nyakatura G."/>
            <person name="Adetobi M."/>
            <person name="Chiaromonte F."/>
            <person name="Elnitski L."/>
            <person name="Eswara P."/>
            <person name="Hardison R.C."/>
            <person name="Hou M."/>
            <person name="Kolbe D."/>
            <person name="Makova K."/>
            <person name="Miller W."/>
            <person name="Nekrutenko A."/>
            <person name="Riemer C."/>
            <person name="Schwartz S."/>
            <person name="Taylor J."/>
            <person name="Yang S."/>
            <person name="Zhang Y."/>
            <person name="Lindpaintner K."/>
            <person name="Andrews T.D."/>
            <person name="Caccamo M."/>
            <person name="Clamp M."/>
            <person name="Clarke L."/>
            <person name="Curwen V."/>
            <person name="Durbin R.M."/>
            <person name="Eyras E."/>
            <person name="Searle S.M."/>
            <person name="Cooper G.M."/>
            <person name="Batzoglou S."/>
            <person name="Brudno M."/>
            <person name="Sidow A."/>
            <person name="Stone E.A."/>
            <person name="Payseur B.A."/>
            <person name="Bourque G."/>
            <person name="Lopez-Otin C."/>
            <person name="Puente X.S."/>
            <person name="Chakrabarti K."/>
            <person name="Chatterji S."/>
            <person name="Dewey C."/>
            <person name="Pachter L."/>
            <person name="Bray N."/>
            <person name="Yap V.B."/>
            <person name="Caspi A."/>
            <person name="Tesler G."/>
            <person name="Pevzner P.A."/>
            <person name="Haussler D."/>
            <person name="Roskin K.M."/>
            <person name="Baertsch R."/>
            <person name="Clawson H."/>
            <person name="Furey T.S."/>
            <person name="Hinrichs A.S."/>
            <person name="Karolchik D."/>
            <person name="Kent W.J."/>
            <person name="Rosenbloom K.R."/>
            <person name="Trumbower H."/>
            <person name="Weirauch M."/>
            <person name="Cooper D.N."/>
            <person name="Stenson P.D."/>
            <person name="Ma B."/>
            <person name="Brent M."/>
            <person name="Arumugam M."/>
            <person name="Shteynberg D."/>
            <person name="Copley R.R."/>
            <person name="Taylor M.S."/>
            <person name="Riethman H."/>
            <person name="Mudunuri U."/>
            <person name="Peterson J."/>
            <person name="Guyer M."/>
            <person name="Felsenfeld A."/>
            <person name="Old S."/>
            <person name="Mockrin S."/>
            <person name="Collins F.S."/>
        </authorList>
    </citation>
    <scope>NUCLEOTIDE SEQUENCE [LARGE SCALE GENOMIC DNA]</scope>
    <source>
        <strain>Brown Norway</strain>
    </source>
</reference>
<reference key="2">
    <citation type="journal article" date="2004" name="Genome Res.">
        <title>The status, quality, and expansion of the NIH full-length cDNA project: the Mammalian Gene Collection (MGC).</title>
        <authorList>
            <consortium name="The MGC Project Team"/>
        </authorList>
    </citation>
    <scope>NUCLEOTIDE SEQUENCE [LARGE SCALE MRNA] (ISOFORM 2)</scope>
    <source>
        <tissue>Prostate</tissue>
    </source>
</reference>
<protein>
    <recommendedName>
        <fullName>Epithelial splicing regulatory protein 1</fullName>
    </recommendedName>
    <alternativeName>
        <fullName>RNA-binding motif protein 35A</fullName>
    </alternativeName>
    <alternativeName>
        <fullName>RNA-binding protein 35A</fullName>
    </alternativeName>
</protein>
<accession>B2RYD2</accession>
<dbReference type="EMBL" id="AABR03040708">
    <property type="status" value="NOT_ANNOTATED_CDS"/>
    <property type="molecule type" value="Genomic_DNA"/>
</dbReference>
<dbReference type="EMBL" id="AABR03042124">
    <property type="status" value="NOT_ANNOTATED_CDS"/>
    <property type="molecule type" value="Genomic_DNA"/>
</dbReference>
<dbReference type="EMBL" id="BC166735">
    <property type="protein sequence ID" value="AAI66735.1"/>
    <property type="molecule type" value="mRNA"/>
</dbReference>
<dbReference type="RefSeq" id="NP_001121036.2">
    <molecule id="B2RYD2-2"/>
    <property type="nucleotide sequence ID" value="NM_001127564.2"/>
</dbReference>
<dbReference type="SMR" id="B2RYD2"/>
<dbReference type="FunCoup" id="B2RYD2">
    <property type="interactions" value="955"/>
</dbReference>
<dbReference type="STRING" id="10116.ENSRNOP00000010846"/>
<dbReference type="PhosphoSitePlus" id="B2RYD2"/>
<dbReference type="PaxDb" id="10116-ENSRNOP00000010846"/>
<dbReference type="PeptideAtlas" id="B2RYD2"/>
<dbReference type="GeneID" id="500409"/>
<dbReference type="KEGG" id="rno:500409"/>
<dbReference type="UCSC" id="RGD:1560481">
    <molecule id="B2RYD2-1"/>
    <property type="organism name" value="rat"/>
</dbReference>
<dbReference type="AGR" id="RGD:1560481"/>
<dbReference type="CTD" id="54845"/>
<dbReference type="RGD" id="1560481">
    <property type="gene designation" value="Esrp1"/>
</dbReference>
<dbReference type="VEuPathDB" id="HostDB:ENSRNOG00000008184"/>
<dbReference type="eggNOG" id="KOG1365">
    <property type="taxonomic scope" value="Eukaryota"/>
</dbReference>
<dbReference type="InParanoid" id="B2RYD2"/>
<dbReference type="PhylomeDB" id="B2RYD2"/>
<dbReference type="PRO" id="PR:B2RYD2"/>
<dbReference type="Proteomes" id="UP000002494">
    <property type="component" value="Chromosome 5"/>
</dbReference>
<dbReference type="Bgee" id="ENSRNOG00000008184">
    <property type="expression patterns" value="Expressed in colon and 12 other cell types or tissues"/>
</dbReference>
<dbReference type="ExpressionAtlas" id="B2RYD2">
    <property type="expression patterns" value="baseline and differential"/>
</dbReference>
<dbReference type="GO" id="GO:0005654">
    <property type="term" value="C:nucleoplasm"/>
    <property type="evidence" value="ECO:0000318"/>
    <property type="project" value="GO_Central"/>
</dbReference>
<dbReference type="GO" id="GO:0005634">
    <property type="term" value="C:nucleus"/>
    <property type="evidence" value="ECO:0000250"/>
    <property type="project" value="UniProtKB"/>
</dbReference>
<dbReference type="GO" id="GO:1990904">
    <property type="term" value="C:ribonucleoprotein complex"/>
    <property type="evidence" value="ECO:0000318"/>
    <property type="project" value="GO_Central"/>
</dbReference>
<dbReference type="GO" id="GO:0003729">
    <property type="term" value="F:mRNA binding"/>
    <property type="evidence" value="ECO:0000250"/>
    <property type="project" value="UniProtKB"/>
</dbReference>
<dbReference type="GO" id="GO:0000380">
    <property type="term" value="P:alternative mRNA splicing, via spliceosome"/>
    <property type="evidence" value="ECO:0000266"/>
    <property type="project" value="RGD"/>
</dbReference>
<dbReference type="GO" id="GO:0060445">
    <property type="term" value="P:branching involved in salivary gland morphogenesis"/>
    <property type="evidence" value="ECO:0000266"/>
    <property type="project" value="RGD"/>
</dbReference>
<dbReference type="GO" id="GO:0050673">
    <property type="term" value="P:epithelial cell proliferation"/>
    <property type="evidence" value="ECO:0000266"/>
    <property type="project" value="RGD"/>
</dbReference>
<dbReference type="GO" id="GO:0060441">
    <property type="term" value="P:epithelial tube branching involved in lung morphogenesis"/>
    <property type="evidence" value="ECO:0000266"/>
    <property type="project" value="RGD"/>
</dbReference>
<dbReference type="GO" id="GO:0050679">
    <property type="term" value="P:positive regulation of epithelial cell proliferation"/>
    <property type="evidence" value="ECO:0000266"/>
    <property type="project" value="RGD"/>
</dbReference>
<dbReference type="GO" id="GO:0042669">
    <property type="term" value="P:regulation of inner ear auditory receptor cell fate specification"/>
    <property type="evidence" value="ECO:0000250"/>
    <property type="project" value="UniProtKB"/>
</dbReference>
<dbReference type="GO" id="GO:0043484">
    <property type="term" value="P:regulation of RNA splicing"/>
    <property type="evidence" value="ECO:0000250"/>
    <property type="project" value="UniProtKB"/>
</dbReference>
<dbReference type="CDD" id="cd12739">
    <property type="entry name" value="RRM2_ESRP1"/>
    <property type="match status" value="1"/>
</dbReference>
<dbReference type="CDD" id="cd12742">
    <property type="entry name" value="RRM3_ESRP1_ESRP2"/>
    <property type="match status" value="1"/>
</dbReference>
<dbReference type="FunFam" id="3.30.70.330:FF:000041">
    <property type="entry name" value="Epithelial splicing regulatory protein 1"/>
    <property type="match status" value="1"/>
</dbReference>
<dbReference type="FunFam" id="3.30.70.330:FF:000070">
    <property type="entry name" value="Epithelial splicing regulatory protein 1"/>
    <property type="match status" value="1"/>
</dbReference>
<dbReference type="FunFam" id="3.30.420.10:FF:000023">
    <property type="entry name" value="epithelial splicing regulatory protein 1 isoform X1"/>
    <property type="match status" value="1"/>
</dbReference>
<dbReference type="FunFam" id="3.30.70.330:FF:000056">
    <property type="entry name" value="epithelial splicing regulatory protein 1 isoform X1"/>
    <property type="match status" value="1"/>
</dbReference>
<dbReference type="Gene3D" id="3.30.70.330">
    <property type="match status" value="3"/>
</dbReference>
<dbReference type="Gene3D" id="3.30.420.10">
    <property type="entry name" value="Ribonuclease H-like superfamily/Ribonuclease H"/>
    <property type="match status" value="1"/>
</dbReference>
<dbReference type="InterPro" id="IPR050666">
    <property type="entry name" value="ESRP"/>
</dbReference>
<dbReference type="InterPro" id="IPR012677">
    <property type="entry name" value="Nucleotide-bd_a/b_plait_sf"/>
</dbReference>
<dbReference type="InterPro" id="IPR035979">
    <property type="entry name" value="RBD_domain_sf"/>
</dbReference>
<dbReference type="InterPro" id="IPR012337">
    <property type="entry name" value="RNaseH-like_sf"/>
</dbReference>
<dbReference type="InterPro" id="IPR036397">
    <property type="entry name" value="RNaseH_sf"/>
</dbReference>
<dbReference type="InterPro" id="IPR000504">
    <property type="entry name" value="RRM_dom"/>
</dbReference>
<dbReference type="PANTHER" id="PTHR13976">
    <property type="entry name" value="HETEROGENEOUS NUCLEAR RIBONUCLEOPROTEIN-RELATED"/>
    <property type="match status" value="1"/>
</dbReference>
<dbReference type="SMART" id="SM00360">
    <property type="entry name" value="RRM"/>
    <property type="match status" value="3"/>
</dbReference>
<dbReference type="SUPFAM" id="SSF53098">
    <property type="entry name" value="Ribonuclease H-like"/>
    <property type="match status" value="1"/>
</dbReference>
<dbReference type="SUPFAM" id="SSF54928">
    <property type="entry name" value="RNA-binding domain, RBD"/>
    <property type="match status" value="2"/>
</dbReference>
<dbReference type="PROSITE" id="PS50102">
    <property type="entry name" value="RRM"/>
    <property type="match status" value="2"/>
</dbReference>
<organism>
    <name type="scientific">Rattus norvegicus</name>
    <name type="common">Rat</name>
    <dbReference type="NCBI Taxonomy" id="10116"/>
    <lineage>
        <taxon>Eukaryota</taxon>
        <taxon>Metazoa</taxon>
        <taxon>Chordata</taxon>
        <taxon>Craniata</taxon>
        <taxon>Vertebrata</taxon>
        <taxon>Euteleostomi</taxon>
        <taxon>Mammalia</taxon>
        <taxon>Eutheria</taxon>
        <taxon>Euarchontoglires</taxon>
        <taxon>Glires</taxon>
        <taxon>Rodentia</taxon>
        <taxon>Myomorpha</taxon>
        <taxon>Muroidea</taxon>
        <taxon>Muridae</taxon>
        <taxon>Murinae</taxon>
        <taxon>Rattus</taxon>
    </lineage>
</organism>
<name>ESRP1_RAT</name>
<sequence>MTASPDYLVVLFGITAGATGAKLGSDEKELILLLWKVVDLANKKVGQLHEVLVRPDQLELTEDCKEETKIDAENLSSAPQLDQALRQFNQSVSNELNIGVGTSFCLCTDGQLHVRQILHPEASKKNVLLPECFYSFFDLRKEFKKCCPGSPDLDKLDVAAMAESLNFEKNDSMSRYGASQVEDMGNIILAMISEPYNHRFSDPERVNYKFESGTCSKTELIDGNTVVRARGLPWQSSDQDIARFFKGLNIAKGGAALCLNAQGRRNGEALVRFVSEEHRDLALQRHKHHMGTRYIEVYKATGEDFLKIAGGTSNEVAQFLSKENQVIVRMRGLPFTATAEEVVAFFGQHCPITGGKEGILFVTYPDGRPTGDAFVLFACEEYAQNALRKHKDLLGKRYIELFRSTAAEVQQVLNRFSSAPLIPLPTAPIIPVLPQQFVPPTNVRDCVRLRGLPYAATIEDILDFLGEFSTDIRTHGVHMVLNHQGRPSGDAFIQMKSTDRAFMAAQKYHKKTMKDRYVEVFQCSAEEMNFVLMGGTLNRNGLSPPPCLSPPSYTFPAPAAVIPTEAAIYQPSLLLNPRALQPSTAYYPAGTQLFMNYTAYYPSPPGSPNSLGYFPTAANLSSVPPQPGTVVRMQGLAYNTGVKEILNFFQGYQYATEDGLVHANDQARTVPKEWVCI</sequence>
<gene>
    <name type="primary">Esrp1</name>
    <name type="synonym">Rbm35a</name>
</gene>
<keyword id="KW-0025">Alternative splicing</keyword>
<keyword id="KW-0488">Methylation</keyword>
<keyword id="KW-0507">mRNA processing</keyword>
<keyword id="KW-0508">mRNA splicing</keyword>
<keyword id="KW-0539">Nucleus</keyword>
<keyword id="KW-0597">Phosphoprotein</keyword>
<keyword id="KW-1185">Reference proteome</keyword>
<keyword id="KW-0677">Repeat</keyword>
<keyword id="KW-0694">RNA-binding</keyword>